<reference key="1">
    <citation type="journal article" date="1995" name="J. Biol. Chem.">
        <title>Identification, isolation, and cloning of a Bacillus thuringiensis CryIAc toxin-binding protein from the midgut of the lepidopteran insect Heliothis virescens.</title>
        <authorList>
            <person name="Gill S.S."/>
            <person name="Cowles E.A."/>
            <person name="Francis V."/>
        </authorList>
    </citation>
    <scope>NUCLEOTIDE SEQUENCE [MRNA]</scope>
    <scope>PROTEIN SEQUENCE OF 53-63</scope>
    <source>
        <tissue>Midgut</tissue>
    </source>
</reference>
<name>AMPM_HELVI</name>
<comment type="function">
    <text>Binds to the B.thuringiensis toxin, CryIA(C).</text>
</comment>
<comment type="cofactor">
    <cofactor evidence="1">
        <name>Zn(2+)</name>
        <dbReference type="ChEBI" id="CHEBI:29105"/>
    </cofactor>
    <text evidence="1">Binds 1 zinc ion per subunit.</text>
</comment>
<comment type="subcellular location">
    <subcellularLocation>
        <location>Cell membrane</location>
        <topology>Lipid-anchor</topology>
        <topology>GPI-anchor</topology>
    </subcellularLocation>
</comment>
<comment type="similarity">
    <text evidence="6">Belongs to the peptidase M1 family.</text>
</comment>
<protein>
    <recommendedName>
        <fullName>Membrane alanyl aminopeptidase</fullName>
        <ecNumber>3.4.11.-</ecNumber>
    </recommendedName>
    <alternativeName>
        <fullName>Aminopeptidase N-like protein</fullName>
    </alternativeName>
    <alternativeName>
        <fullName>BTBP1</fullName>
    </alternativeName>
    <alternativeName>
        <fullName>CryIA(C) receptor</fullName>
    </alternativeName>
</protein>
<accession>Q11000</accession>
<organism>
    <name type="scientific">Heliothis virescens</name>
    <name type="common">Tobacco budworm moth</name>
    <dbReference type="NCBI Taxonomy" id="7102"/>
    <lineage>
        <taxon>Eukaryota</taxon>
        <taxon>Metazoa</taxon>
        <taxon>Ecdysozoa</taxon>
        <taxon>Arthropoda</taxon>
        <taxon>Hexapoda</taxon>
        <taxon>Insecta</taxon>
        <taxon>Pterygota</taxon>
        <taxon>Neoptera</taxon>
        <taxon>Endopterygota</taxon>
        <taxon>Lepidoptera</taxon>
        <taxon>Glossata</taxon>
        <taxon>Ditrysia</taxon>
        <taxon>Noctuoidea</taxon>
        <taxon>Noctuidae</taxon>
        <taxon>Heliothinae</taxon>
        <taxon>Heliothis</taxon>
    </lineage>
</organism>
<evidence type="ECO:0000250" key="1"/>
<evidence type="ECO:0000255" key="2"/>
<evidence type="ECO:0000255" key="3">
    <source>
        <dbReference type="PROSITE-ProRule" id="PRU10095"/>
    </source>
</evidence>
<evidence type="ECO:0000256" key="4">
    <source>
        <dbReference type="SAM" id="MobiDB-lite"/>
    </source>
</evidence>
<evidence type="ECO:0000269" key="5">
    <source>
    </source>
</evidence>
<evidence type="ECO:0000305" key="6"/>
<dbReference type="EC" id="3.4.11.-"/>
<dbReference type="EMBL" id="U35096">
    <property type="protein sequence ID" value="AAC46929.1"/>
    <property type="molecule type" value="mRNA"/>
</dbReference>
<dbReference type="PIR" id="T18533">
    <property type="entry name" value="T18533"/>
</dbReference>
<dbReference type="SMR" id="Q11000"/>
<dbReference type="MEROPS" id="M01.013"/>
<dbReference type="GO" id="GO:0005737">
    <property type="term" value="C:cytoplasm"/>
    <property type="evidence" value="ECO:0007669"/>
    <property type="project" value="TreeGrafter"/>
</dbReference>
<dbReference type="GO" id="GO:0005615">
    <property type="term" value="C:extracellular space"/>
    <property type="evidence" value="ECO:0007669"/>
    <property type="project" value="TreeGrafter"/>
</dbReference>
<dbReference type="GO" id="GO:0005886">
    <property type="term" value="C:plasma membrane"/>
    <property type="evidence" value="ECO:0007669"/>
    <property type="project" value="UniProtKB-SubCell"/>
</dbReference>
<dbReference type="GO" id="GO:0098552">
    <property type="term" value="C:side of membrane"/>
    <property type="evidence" value="ECO:0007669"/>
    <property type="project" value="UniProtKB-KW"/>
</dbReference>
<dbReference type="GO" id="GO:0070006">
    <property type="term" value="F:metalloaminopeptidase activity"/>
    <property type="evidence" value="ECO:0007669"/>
    <property type="project" value="TreeGrafter"/>
</dbReference>
<dbReference type="GO" id="GO:0042277">
    <property type="term" value="F:peptide binding"/>
    <property type="evidence" value="ECO:0007669"/>
    <property type="project" value="TreeGrafter"/>
</dbReference>
<dbReference type="GO" id="GO:0008270">
    <property type="term" value="F:zinc ion binding"/>
    <property type="evidence" value="ECO:0007669"/>
    <property type="project" value="InterPro"/>
</dbReference>
<dbReference type="GO" id="GO:0043171">
    <property type="term" value="P:peptide catabolic process"/>
    <property type="evidence" value="ECO:0007669"/>
    <property type="project" value="TreeGrafter"/>
</dbReference>
<dbReference type="GO" id="GO:0006508">
    <property type="term" value="P:proteolysis"/>
    <property type="evidence" value="ECO:0007669"/>
    <property type="project" value="UniProtKB-KW"/>
</dbReference>
<dbReference type="CDD" id="cd09601">
    <property type="entry name" value="M1_APN-Q_like"/>
    <property type="match status" value="1"/>
</dbReference>
<dbReference type="FunFam" id="2.60.40.1910:FF:000008">
    <property type="entry name" value="Aminopeptidase"/>
    <property type="match status" value="1"/>
</dbReference>
<dbReference type="FunFam" id="1.10.390.10:FF:000013">
    <property type="entry name" value="Aminopeptidase N"/>
    <property type="match status" value="1"/>
</dbReference>
<dbReference type="Gene3D" id="1.25.50.20">
    <property type="match status" value="1"/>
</dbReference>
<dbReference type="Gene3D" id="2.60.40.1910">
    <property type="match status" value="1"/>
</dbReference>
<dbReference type="Gene3D" id="1.10.390.10">
    <property type="entry name" value="Neutral Protease Domain 2"/>
    <property type="match status" value="1"/>
</dbReference>
<dbReference type="Gene3D" id="2.60.40.1730">
    <property type="entry name" value="tricorn interacting facor f3 domain"/>
    <property type="match status" value="1"/>
</dbReference>
<dbReference type="InterPro" id="IPR045357">
    <property type="entry name" value="Aminopeptidase_N-like_N"/>
</dbReference>
<dbReference type="InterPro" id="IPR042097">
    <property type="entry name" value="Aminopeptidase_N-like_N_sf"/>
</dbReference>
<dbReference type="InterPro" id="IPR024571">
    <property type="entry name" value="ERAP1-like_C_dom"/>
</dbReference>
<dbReference type="InterPro" id="IPR034016">
    <property type="entry name" value="M1_APN-typ"/>
</dbReference>
<dbReference type="InterPro" id="IPR001930">
    <property type="entry name" value="Peptidase_M1"/>
</dbReference>
<dbReference type="InterPro" id="IPR050344">
    <property type="entry name" value="Peptidase_M1_aminopeptidases"/>
</dbReference>
<dbReference type="InterPro" id="IPR014782">
    <property type="entry name" value="Peptidase_M1_dom"/>
</dbReference>
<dbReference type="InterPro" id="IPR027268">
    <property type="entry name" value="Peptidase_M4/M1_CTD_sf"/>
</dbReference>
<dbReference type="PANTHER" id="PTHR11533:SF301">
    <property type="entry name" value="AMINOPEPTIDASE"/>
    <property type="match status" value="1"/>
</dbReference>
<dbReference type="PANTHER" id="PTHR11533">
    <property type="entry name" value="PROTEASE M1 ZINC METALLOPROTEASE"/>
    <property type="match status" value="1"/>
</dbReference>
<dbReference type="Pfam" id="PF11838">
    <property type="entry name" value="ERAP1_C"/>
    <property type="match status" value="1"/>
</dbReference>
<dbReference type="Pfam" id="PF01433">
    <property type="entry name" value="Peptidase_M1"/>
    <property type="match status" value="1"/>
</dbReference>
<dbReference type="Pfam" id="PF17900">
    <property type="entry name" value="Peptidase_M1_N"/>
    <property type="match status" value="1"/>
</dbReference>
<dbReference type="PRINTS" id="PR00756">
    <property type="entry name" value="ALADIPTASE"/>
</dbReference>
<dbReference type="SUPFAM" id="SSF63737">
    <property type="entry name" value="Leukotriene A4 hydrolase N-terminal domain"/>
    <property type="match status" value="1"/>
</dbReference>
<dbReference type="SUPFAM" id="SSF55486">
    <property type="entry name" value="Metalloproteases ('zincins'), catalytic domain"/>
    <property type="match status" value="1"/>
</dbReference>
<dbReference type="PROSITE" id="PS00142">
    <property type="entry name" value="ZINC_PROTEASE"/>
    <property type="match status" value="1"/>
</dbReference>
<sequence>MAAIKLLVLSLACACVIAHSPIPPASRTIFLDERLEGGAFENIDAFENIELSNVVASPYRLPTTTVPTHYKILWIIDIHQPVQTYSGNVVITLHATQAQVNEIVIHSDHMTLSSVVLRQGDTVIPTTPTAQPEYHFLRVKLNDGYLAYNADNAVLYTLSIDFTAPMRDDMYGIYNSWYRNLPDDANVRWMATTQFQATAARYAFPCYDEPGFKAKFDVTIRRPVGYSSWFCTRQKGSGPSTVAGYEEDEYHTTPTMSTYLLALIVSEYTSLPATNAAGEILHEVIARPGAINNGQAVYAQRVGQALLAEMSDHTGFDFYAQDPNLKMTQAAIPDFGAGAMENWGLLTYREAYLLYDEQHTNSYFKQIIAYILSHEIAHMWFGNLVTNAWWDVLWLNEGFARYYQYFLTAWVEDLGLATRFINEQVHASLLSDSSIYAHPLTNPGVGSPAAVSAMFSTVTYNKGASIIRMTEHLLGFDVHRTGLRNYLKDLAYKTAQPIDLFTALESAGNQAGALSAYGSDFDFVKYYESWTEQPGHPVLNVQINHQTGQMTITQRRFDIDTGHSVQNRNYIIPITFTTGANPSFDNTKPSHIISKGVTVIDRGVVGDYWTIFNIQQTGFYRVNYDDYTWNLIVLALRGADREKIHEYNRAQIVNDVFQFARSGLMTYQRALNILSFLEFETEYAPWVAAITGFNWLRNRLVGKPQLDELNEKIVQWSSKVMGELTYMPTEGEPFMRSYLRWQLAPVMCNLNVPACRAGARAIFEDLRVFGHEVPVDSRNWVYCNALRDGGAQEFNFLYNRFKSHNVYTEKIVLLQTLGCTSHVESLNTLLTDIVTPNQMIRPQDYTTAFNTAVSGNEVNTRLVWNYIQANLQLVFNAFASPRTPLSYIAARLRTVEEVVEYQTWLNTTAIQSALGTNYNAIYGDSVATYNSILWVSTIEDSLSTYLTNGNDVIEPSTSTTSTTAAPTTVTQPTITEPSTPTLPELTDSAMTSFASLFIISLGAILHLIL</sequence>
<feature type="signal peptide" evidence="2">
    <location>
        <begin position="1"/>
        <end position="15"/>
    </location>
</feature>
<feature type="propeptide" id="PRO_0000026745" description="Activation peptide" evidence="5">
    <location>
        <begin position="16"/>
        <end position="52"/>
    </location>
</feature>
<feature type="chain" id="PRO_0000026746" description="Membrane alanyl aminopeptidase">
    <location>
        <begin position="53"/>
        <end position="987"/>
    </location>
</feature>
<feature type="propeptide" id="PRO_0000026747" description="Removed in mature form" evidence="2">
    <location>
        <begin position="988"/>
        <end position="1009"/>
    </location>
</feature>
<feature type="region of interest" description="Disordered" evidence="4">
    <location>
        <begin position="955"/>
        <end position="980"/>
    </location>
</feature>
<feature type="active site" description="Proton acceptor" evidence="3">
    <location>
        <position position="375"/>
    </location>
</feature>
<feature type="binding site" evidence="1">
    <location>
        <begin position="338"/>
        <end position="342"/>
    </location>
    <ligand>
        <name>substrate</name>
    </ligand>
</feature>
<feature type="binding site" evidence="3">
    <location>
        <position position="374"/>
    </location>
    <ligand>
        <name>Zn(2+)</name>
        <dbReference type="ChEBI" id="CHEBI:29105"/>
        <note>catalytic</note>
    </ligand>
</feature>
<feature type="binding site" evidence="3">
    <location>
        <position position="378"/>
    </location>
    <ligand>
        <name>Zn(2+)</name>
        <dbReference type="ChEBI" id="CHEBI:29105"/>
        <note>catalytic</note>
    </ligand>
</feature>
<feature type="binding site" evidence="3">
    <location>
        <position position="397"/>
    </location>
    <ligand>
        <name>Zn(2+)</name>
        <dbReference type="ChEBI" id="CHEBI:29105"/>
        <note>catalytic</note>
    </ligand>
</feature>
<feature type="site" description="Transition state stabilizer" evidence="1">
    <location>
        <position position="460"/>
    </location>
</feature>
<feature type="lipid moiety-binding region" description="GPI-anchor amidated aspartate" evidence="2">
    <location>
        <position position="987"/>
    </location>
</feature>
<feature type="glycosylation site" description="N-linked (GlcNAc...) asparagine" evidence="2">
    <location>
        <position position="906"/>
    </location>
</feature>
<proteinExistence type="evidence at protein level"/>
<keyword id="KW-0031">Aminopeptidase</keyword>
<keyword id="KW-1003">Cell membrane</keyword>
<keyword id="KW-0903">Direct protein sequencing</keyword>
<keyword id="KW-0325">Glycoprotein</keyword>
<keyword id="KW-0336">GPI-anchor</keyword>
<keyword id="KW-0378">Hydrolase</keyword>
<keyword id="KW-0449">Lipoprotein</keyword>
<keyword id="KW-0472">Membrane</keyword>
<keyword id="KW-0479">Metal-binding</keyword>
<keyword id="KW-0482">Metalloprotease</keyword>
<keyword id="KW-0645">Protease</keyword>
<keyword id="KW-0732">Signal</keyword>
<keyword id="KW-0862">Zinc</keyword>